<gene>
    <name type="primary">tsdB</name>
    <name type="ordered locus">Tint_2893</name>
</gene>
<accession>D5WYQ6</accession>
<comment type="function">
    <text evidence="4">Acts as an electron acceptor for the thiosulfate dehydrogenase TsdA.</text>
</comment>
<comment type="PTM">
    <text evidence="1">Binds 2 heme c groups covalently per subunit.</text>
</comment>
<proteinExistence type="inferred from homology"/>
<name>TSDB_THIK1</name>
<keyword id="KW-0349">Heme</keyword>
<keyword id="KW-0408">Iron</keyword>
<keyword id="KW-0479">Metal-binding</keyword>
<keyword id="KW-0677">Repeat</keyword>
<keyword id="KW-0732">Signal</keyword>
<evidence type="ECO:0000250" key="1"/>
<evidence type="ECO:0000255" key="2"/>
<evidence type="ECO:0000255" key="3">
    <source>
        <dbReference type="PROSITE-ProRule" id="PRU00433"/>
    </source>
</evidence>
<evidence type="ECO:0000269" key="4">
    <source>
    </source>
</evidence>
<protein>
    <recommendedName>
        <fullName>Thiosulfate dehydrogenase electron acceptor</fullName>
    </recommendedName>
</protein>
<feature type="signal peptide" evidence="2">
    <location>
        <begin position="1"/>
        <end position="28"/>
    </location>
</feature>
<feature type="chain" id="PRO_5000590632" description="Thiosulfate dehydrogenase electron acceptor">
    <location>
        <begin position="29"/>
        <end position="217"/>
    </location>
</feature>
<feature type="domain" description="Cytochrome c 1" evidence="3">
    <location>
        <begin position="29"/>
        <end position="104"/>
    </location>
</feature>
<feature type="domain" description="Cytochrome c 2" evidence="3">
    <location>
        <begin position="116"/>
        <end position="206"/>
    </location>
</feature>
<feature type="binding site" description="covalent" evidence="3">
    <location>
        <position position="37"/>
    </location>
    <ligand>
        <name>heme c</name>
        <dbReference type="ChEBI" id="CHEBI:61717"/>
        <label>1</label>
    </ligand>
</feature>
<feature type="binding site" description="covalent" evidence="3">
    <location>
        <position position="40"/>
    </location>
    <ligand>
        <name>heme c</name>
        <dbReference type="ChEBI" id="CHEBI:61717"/>
        <label>1</label>
    </ligand>
</feature>
<feature type="binding site" description="axial binding residue" evidence="3">
    <location>
        <position position="41"/>
    </location>
    <ligand>
        <name>heme c</name>
        <dbReference type="ChEBI" id="CHEBI:61717"/>
        <label>1</label>
    </ligand>
    <ligandPart>
        <name>Fe</name>
        <dbReference type="ChEBI" id="CHEBI:18248"/>
    </ligandPart>
</feature>
<feature type="binding site" description="covalent" evidence="3">
    <location>
        <position position="137"/>
    </location>
    <ligand>
        <name>heme c</name>
        <dbReference type="ChEBI" id="CHEBI:61717"/>
        <label>2</label>
    </ligand>
</feature>
<feature type="binding site" description="covalent" evidence="3">
    <location>
        <position position="140"/>
    </location>
    <ligand>
        <name>heme c</name>
        <dbReference type="ChEBI" id="CHEBI:61717"/>
        <label>2</label>
    </ligand>
</feature>
<feature type="binding site" description="axial binding residue" evidence="3">
    <location>
        <position position="141"/>
    </location>
    <ligand>
        <name>heme c</name>
        <dbReference type="ChEBI" id="CHEBI:61717"/>
        <label>2</label>
    </ligand>
    <ligandPart>
        <name>Fe</name>
        <dbReference type="ChEBI" id="CHEBI:18248"/>
    </ligandPart>
</feature>
<dbReference type="EMBL" id="CP002021">
    <property type="protein sequence ID" value="ADG32233.1"/>
    <property type="molecule type" value="Genomic_DNA"/>
</dbReference>
<dbReference type="SMR" id="D5WYQ6"/>
<dbReference type="STRING" id="75379.Tint_2893"/>
<dbReference type="KEGG" id="tin:Tint_2893"/>
<dbReference type="eggNOG" id="COG2863">
    <property type="taxonomic scope" value="Bacteria"/>
</dbReference>
<dbReference type="HOGENOM" id="CLU_076280_0_1_4"/>
<dbReference type="BioCyc" id="TINT75379:TINT_RS14500-MONOMER"/>
<dbReference type="GO" id="GO:0042597">
    <property type="term" value="C:periplasmic space"/>
    <property type="evidence" value="ECO:0007669"/>
    <property type="project" value="InterPro"/>
</dbReference>
<dbReference type="GO" id="GO:0009055">
    <property type="term" value="F:electron transfer activity"/>
    <property type="evidence" value="ECO:0007669"/>
    <property type="project" value="InterPro"/>
</dbReference>
<dbReference type="GO" id="GO:0020037">
    <property type="term" value="F:heme binding"/>
    <property type="evidence" value="ECO:0007669"/>
    <property type="project" value="InterPro"/>
</dbReference>
<dbReference type="GO" id="GO:0005506">
    <property type="term" value="F:iron ion binding"/>
    <property type="evidence" value="ECO:0007669"/>
    <property type="project" value="InterPro"/>
</dbReference>
<dbReference type="Gene3D" id="1.10.760.10">
    <property type="entry name" value="Cytochrome c-like domain"/>
    <property type="match status" value="2"/>
</dbReference>
<dbReference type="InterPro" id="IPR009056">
    <property type="entry name" value="Cyt_c-like_dom"/>
</dbReference>
<dbReference type="InterPro" id="IPR036909">
    <property type="entry name" value="Cyt_c-like_dom_sf"/>
</dbReference>
<dbReference type="InterPro" id="IPR024167">
    <property type="entry name" value="Cytochrome_c4-like"/>
</dbReference>
<dbReference type="InterPro" id="IPR050597">
    <property type="entry name" value="Cytochrome_c_Oxidase_Subunit"/>
</dbReference>
<dbReference type="PANTHER" id="PTHR33751:SF11">
    <property type="entry name" value="BLL4483 PROTEIN"/>
    <property type="match status" value="1"/>
</dbReference>
<dbReference type="PANTHER" id="PTHR33751">
    <property type="entry name" value="CBB3-TYPE CYTOCHROME C OXIDASE SUBUNIT FIXP"/>
    <property type="match status" value="1"/>
</dbReference>
<dbReference type="Pfam" id="PF00034">
    <property type="entry name" value="Cytochrom_C"/>
    <property type="match status" value="1"/>
</dbReference>
<dbReference type="Pfam" id="PF13442">
    <property type="entry name" value="Cytochrome_CBB3"/>
    <property type="match status" value="1"/>
</dbReference>
<dbReference type="PIRSF" id="PIRSF000005">
    <property type="entry name" value="Cytochrome_c4"/>
    <property type="match status" value="1"/>
</dbReference>
<dbReference type="SUPFAM" id="SSF46626">
    <property type="entry name" value="Cytochrome c"/>
    <property type="match status" value="2"/>
</dbReference>
<dbReference type="PROSITE" id="PS51007">
    <property type="entry name" value="CYTC"/>
    <property type="match status" value="2"/>
</dbReference>
<organism>
    <name type="scientific">Thiomonas intermedia (strain K12)</name>
    <name type="common">Thiobacillus intermedius</name>
    <dbReference type="NCBI Taxonomy" id="75379"/>
    <lineage>
        <taxon>Bacteria</taxon>
        <taxon>Pseudomonadati</taxon>
        <taxon>Pseudomonadota</taxon>
        <taxon>Betaproteobacteria</taxon>
        <taxon>Burkholderiales</taxon>
        <taxon>Thiomonas</taxon>
    </lineage>
</organism>
<reference key="1">
    <citation type="submission" date="2010-04" db="EMBL/GenBank/DDBJ databases">
        <title>Complete sequence of Thiomonas intermedia K12.</title>
        <authorList>
            <consortium name="US DOE Joint Genome Institute"/>
            <person name="Lucas S."/>
            <person name="Copeland A."/>
            <person name="Lapidus A."/>
            <person name="Cheng J.-F."/>
            <person name="Bruce D."/>
            <person name="Goodwin L."/>
            <person name="Pitluck S."/>
            <person name="Davenport K."/>
            <person name="Detter J.C."/>
            <person name="Han C."/>
            <person name="Tapia R."/>
            <person name="Land M."/>
            <person name="Hauser L."/>
            <person name="Kyrpides N."/>
            <person name="Ovchinnikova G."/>
            <person name="Kerfeld C.A."/>
            <person name="Cannon G.C."/>
            <person name="Heinhorst S."/>
            <person name="Woyke T."/>
        </authorList>
    </citation>
    <scope>NUCLEOTIDE SEQUENCE [LARGE SCALE GENOMIC DNA]</scope>
    <source>
        <strain>K12</strain>
    </source>
</reference>
<reference key="2">
    <citation type="journal article" date="2012" name="Environ. Microbiol.">
        <title>Thiosulfate dehydrogenase: a widespread unusual acidophilic c-type cytochrome.</title>
        <authorList>
            <person name="Denkmann K."/>
            <person name="Grein F."/>
            <person name="Zigann R."/>
            <person name="Siemen A."/>
            <person name="Bergmann J."/>
            <person name="van Helmont S."/>
            <person name="Nicolai A."/>
            <person name="Pereira I.A."/>
            <person name="Dahl C."/>
        </authorList>
    </citation>
    <scope>FUNCTION</scope>
</reference>
<sequence length="217" mass="22466">MRQFIPMRRVLAVATLGALFWAAPASWAAAPPEAASCIACHGAGGMGNPAAGYPRLAGLPEQYLADQLRYFADGARNNAVMSGMAKPLSAAQVTALATYYSKLKPSGKPAPMPTGAAAAEGERLALRGDWEKGIPACIRCHGPGAVGVGENFPALVGQSAAYIEAQIKAWKDGSRSGDPLGLMHTVALRMTDAQTQAVAQWLAAQPLSPTKSASAKH</sequence>